<evidence type="ECO:0000305" key="1"/>
<gene>
    <name type="ORF">pi054</name>
    <name type="ORF">SPBC8D2.11</name>
</gene>
<proteinExistence type="predicted"/>
<sequence length="122" mass="14067">MGRPLIESSSNDHVANFNRKTKKLIDQALEHYNGRLPEQLENFSFENFVEVLDTESSVVNRVFEVLVREVAGSFRQRKRAHMPRTNTTAQVVQRQLAPSISTVFSRDSNDPLVDDMDQEYIL</sequence>
<keyword id="KW-1185">Reference proteome</keyword>
<feature type="chain" id="PRO_0000116766" description="Uncharacterized protein C8D2.11">
    <location>
        <begin position="1"/>
        <end position="122"/>
    </location>
</feature>
<feature type="sequence conflict" description="In Ref. 1." evidence="1" ref="1">
    <original>M</original>
    <variation>MLPHLGV</variation>
    <location>
        <position position="1"/>
    </location>
</feature>
<name>YGWB_SCHPO</name>
<accession>O13647</accession>
<accession>Q7LL13</accession>
<reference key="1">
    <citation type="journal article" date="2000" name="Yeast">
        <title>A 38 kb segment containing the cdc2 gene from the left arm of fission yeast chromosome II: sequence analysis and characterization of the genomic DNA and cDNAs encoded on the segment.</title>
        <authorList>
            <person name="Machida M."/>
            <person name="Yamazaki S."/>
            <person name="Kunihiro S."/>
            <person name="Tanaka T."/>
            <person name="Kushida N."/>
            <person name="Jinno K."/>
            <person name="Haikawa Y."/>
            <person name="Yamazaki J."/>
            <person name="Yamamoto S."/>
            <person name="Sekine M."/>
            <person name="Oguchi A."/>
            <person name="Nagai Y."/>
            <person name="Sakai M."/>
            <person name="Aoki K."/>
            <person name="Ogura K."/>
            <person name="Kudoh Y."/>
            <person name="Kikuchi H."/>
            <person name="Zhang M.Q."/>
            <person name="Yanagida M."/>
        </authorList>
    </citation>
    <scope>NUCLEOTIDE SEQUENCE [LARGE SCALE GENOMIC DNA]</scope>
    <source>
        <strain>972 / ATCC 24843</strain>
    </source>
</reference>
<reference key="2">
    <citation type="journal article" date="2002" name="Nature">
        <title>The genome sequence of Schizosaccharomyces pombe.</title>
        <authorList>
            <person name="Wood V."/>
            <person name="Gwilliam R."/>
            <person name="Rajandream M.A."/>
            <person name="Lyne M.H."/>
            <person name="Lyne R."/>
            <person name="Stewart A."/>
            <person name="Sgouros J.G."/>
            <person name="Peat N."/>
            <person name="Hayles J."/>
            <person name="Baker S.G."/>
            <person name="Basham D."/>
            <person name="Bowman S."/>
            <person name="Brooks K."/>
            <person name="Brown D."/>
            <person name="Brown S."/>
            <person name="Chillingworth T."/>
            <person name="Churcher C.M."/>
            <person name="Collins M."/>
            <person name="Connor R."/>
            <person name="Cronin A."/>
            <person name="Davis P."/>
            <person name="Feltwell T."/>
            <person name="Fraser A."/>
            <person name="Gentles S."/>
            <person name="Goble A."/>
            <person name="Hamlin N."/>
            <person name="Harris D.E."/>
            <person name="Hidalgo J."/>
            <person name="Hodgson G."/>
            <person name="Holroyd S."/>
            <person name="Hornsby T."/>
            <person name="Howarth S."/>
            <person name="Huckle E.J."/>
            <person name="Hunt S."/>
            <person name="Jagels K."/>
            <person name="James K.D."/>
            <person name="Jones L."/>
            <person name="Jones M."/>
            <person name="Leather S."/>
            <person name="McDonald S."/>
            <person name="McLean J."/>
            <person name="Mooney P."/>
            <person name="Moule S."/>
            <person name="Mungall K.L."/>
            <person name="Murphy L.D."/>
            <person name="Niblett D."/>
            <person name="Odell C."/>
            <person name="Oliver K."/>
            <person name="O'Neil S."/>
            <person name="Pearson D."/>
            <person name="Quail M.A."/>
            <person name="Rabbinowitsch E."/>
            <person name="Rutherford K.M."/>
            <person name="Rutter S."/>
            <person name="Saunders D."/>
            <person name="Seeger K."/>
            <person name="Sharp S."/>
            <person name="Skelton J."/>
            <person name="Simmonds M.N."/>
            <person name="Squares R."/>
            <person name="Squares S."/>
            <person name="Stevens K."/>
            <person name="Taylor K."/>
            <person name="Taylor R.G."/>
            <person name="Tivey A."/>
            <person name="Walsh S.V."/>
            <person name="Warren T."/>
            <person name="Whitehead S."/>
            <person name="Woodward J.R."/>
            <person name="Volckaert G."/>
            <person name="Aert R."/>
            <person name="Robben J."/>
            <person name="Grymonprez B."/>
            <person name="Weltjens I."/>
            <person name="Vanstreels E."/>
            <person name="Rieger M."/>
            <person name="Schaefer M."/>
            <person name="Mueller-Auer S."/>
            <person name="Gabel C."/>
            <person name="Fuchs M."/>
            <person name="Duesterhoeft A."/>
            <person name="Fritzc C."/>
            <person name="Holzer E."/>
            <person name="Moestl D."/>
            <person name="Hilbert H."/>
            <person name="Borzym K."/>
            <person name="Langer I."/>
            <person name="Beck A."/>
            <person name="Lehrach H."/>
            <person name="Reinhardt R."/>
            <person name="Pohl T.M."/>
            <person name="Eger P."/>
            <person name="Zimmermann W."/>
            <person name="Wedler H."/>
            <person name="Wambutt R."/>
            <person name="Purnelle B."/>
            <person name="Goffeau A."/>
            <person name="Cadieu E."/>
            <person name="Dreano S."/>
            <person name="Gloux S."/>
            <person name="Lelaure V."/>
            <person name="Mottier S."/>
            <person name="Galibert F."/>
            <person name="Aves S.J."/>
            <person name="Xiang Z."/>
            <person name="Hunt C."/>
            <person name="Moore K."/>
            <person name="Hurst S.M."/>
            <person name="Lucas M."/>
            <person name="Rochet M."/>
            <person name="Gaillardin C."/>
            <person name="Tallada V.A."/>
            <person name="Garzon A."/>
            <person name="Thode G."/>
            <person name="Daga R.R."/>
            <person name="Cruzado L."/>
            <person name="Jimenez J."/>
            <person name="Sanchez M."/>
            <person name="del Rey F."/>
            <person name="Benito J."/>
            <person name="Dominguez A."/>
            <person name="Revuelta J.L."/>
            <person name="Moreno S."/>
            <person name="Armstrong J."/>
            <person name="Forsburg S.L."/>
            <person name="Cerutti L."/>
            <person name="Lowe T."/>
            <person name="McCombie W.R."/>
            <person name="Paulsen I."/>
            <person name="Potashkin J."/>
            <person name="Shpakovski G.V."/>
            <person name="Ussery D."/>
            <person name="Barrell B.G."/>
            <person name="Nurse P."/>
        </authorList>
    </citation>
    <scope>NUCLEOTIDE SEQUENCE [LARGE SCALE GENOMIC DNA]</scope>
    <source>
        <strain>972 / ATCC 24843</strain>
    </source>
</reference>
<protein>
    <recommendedName>
        <fullName>Uncharacterized protein C8D2.11</fullName>
    </recommendedName>
</protein>
<organism>
    <name type="scientific">Schizosaccharomyces pombe (strain 972 / ATCC 24843)</name>
    <name type="common">Fission yeast</name>
    <dbReference type="NCBI Taxonomy" id="284812"/>
    <lineage>
        <taxon>Eukaryota</taxon>
        <taxon>Fungi</taxon>
        <taxon>Dikarya</taxon>
        <taxon>Ascomycota</taxon>
        <taxon>Taphrinomycotina</taxon>
        <taxon>Schizosaccharomycetes</taxon>
        <taxon>Schizosaccharomycetales</taxon>
        <taxon>Schizosaccharomycetaceae</taxon>
        <taxon>Schizosaccharomyces</taxon>
    </lineage>
</organism>
<dbReference type="EMBL" id="AB004538">
    <property type="protein sequence ID" value="BAA21435.1"/>
    <property type="molecule type" value="Genomic_DNA"/>
</dbReference>
<dbReference type="EMBL" id="CU329671">
    <property type="protein sequence ID" value="CAA17826.1"/>
    <property type="molecule type" value="Genomic_DNA"/>
</dbReference>
<dbReference type="PIR" id="T40756">
    <property type="entry name" value="T40756"/>
</dbReference>
<dbReference type="RefSeq" id="NP_595573.1">
    <property type="nucleotide sequence ID" value="NM_001021468.2"/>
</dbReference>
<dbReference type="BioGRID" id="277754">
    <property type="interactions" value="4"/>
</dbReference>
<dbReference type="PaxDb" id="4896-SPBC8D2.11.1"/>
<dbReference type="EnsemblFungi" id="SPBC8D2.11.1">
    <property type="protein sequence ID" value="SPBC8D2.11.1:pep"/>
    <property type="gene ID" value="SPBC8D2.11"/>
</dbReference>
<dbReference type="KEGG" id="spo:2541240"/>
<dbReference type="PomBase" id="SPBC8D2.11"/>
<dbReference type="VEuPathDB" id="FungiDB:SPBC8D2.11"/>
<dbReference type="HOGENOM" id="CLU_2016531_0_0_1"/>
<dbReference type="InParanoid" id="O13647"/>
<dbReference type="OMA" id="NDHVANF"/>
<dbReference type="PRO" id="PR:O13647"/>
<dbReference type="Proteomes" id="UP000002485">
    <property type="component" value="Chromosome II"/>
</dbReference>
<dbReference type="GO" id="GO:0005829">
    <property type="term" value="C:cytosol"/>
    <property type="evidence" value="ECO:0007005"/>
    <property type="project" value="PomBase"/>
</dbReference>
<dbReference type="GO" id="GO:0005634">
    <property type="term" value="C:nucleus"/>
    <property type="evidence" value="ECO:0007005"/>
    <property type="project" value="PomBase"/>
</dbReference>